<reference key="1">
    <citation type="journal article" date="2004" name="Nat. Genet.">
        <title>Complete sequencing and characterization of 21,243 full-length human cDNAs.</title>
        <authorList>
            <person name="Ota T."/>
            <person name="Suzuki Y."/>
            <person name="Nishikawa T."/>
            <person name="Otsuki T."/>
            <person name="Sugiyama T."/>
            <person name="Irie R."/>
            <person name="Wakamatsu A."/>
            <person name="Hayashi K."/>
            <person name="Sato H."/>
            <person name="Nagai K."/>
            <person name="Kimura K."/>
            <person name="Makita H."/>
            <person name="Sekine M."/>
            <person name="Obayashi M."/>
            <person name="Nishi T."/>
            <person name="Shibahara T."/>
            <person name="Tanaka T."/>
            <person name="Ishii S."/>
            <person name="Yamamoto J."/>
            <person name="Saito K."/>
            <person name="Kawai Y."/>
            <person name="Isono Y."/>
            <person name="Nakamura Y."/>
            <person name="Nagahari K."/>
            <person name="Murakami K."/>
            <person name="Yasuda T."/>
            <person name="Iwayanagi T."/>
            <person name="Wagatsuma M."/>
            <person name="Shiratori A."/>
            <person name="Sudo H."/>
            <person name="Hosoiri T."/>
            <person name="Kaku Y."/>
            <person name="Kodaira H."/>
            <person name="Kondo H."/>
            <person name="Sugawara M."/>
            <person name="Takahashi M."/>
            <person name="Kanda K."/>
            <person name="Yokoi T."/>
            <person name="Furuya T."/>
            <person name="Kikkawa E."/>
            <person name="Omura Y."/>
            <person name="Abe K."/>
            <person name="Kamihara K."/>
            <person name="Katsuta N."/>
            <person name="Sato K."/>
            <person name="Tanikawa M."/>
            <person name="Yamazaki M."/>
            <person name="Ninomiya K."/>
            <person name="Ishibashi T."/>
            <person name="Yamashita H."/>
            <person name="Murakawa K."/>
            <person name="Fujimori K."/>
            <person name="Tanai H."/>
            <person name="Kimata M."/>
            <person name="Watanabe M."/>
            <person name="Hiraoka S."/>
            <person name="Chiba Y."/>
            <person name="Ishida S."/>
            <person name="Ono Y."/>
            <person name="Takiguchi S."/>
            <person name="Watanabe S."/>
            <person name="Yosida M."/>
            <person name="Hotuta T."/>
            <person name="Kusano J."/>
            <person name="Kanehori K."/>
            <person name="Takahashi-Fujii A."/>
            <person name="Hara H."/>
            <person name="Tanase T.-O."/>
            <person name="Nomura Y."/>
            <person name="Togiya S."/>
            <person name="Komai F."/>
            <person name="Hara R."/>
            <person name="Takeuchi K."/>
            <person name="Arita M."/>
            <person name="Imose N."/>
            <person name="Musashino K."/>
            <person name="Yuuki H."/>
            <person name="Oshima A."/>
            <person name="Sasaki N."/>
            <person name="Aotsuka S."/>
            <person name="Yoshikawa Y."/>
            <person name="Matsunawa H."/>
            <person name="Ichihara T."/>
            <person name="Shiohata N."/>
            <person name="Sano S."/>
            <person name="Moriya S."/>
            <person name="Momiyama H."/>
            <person name="Satoh N."/>
            <person name="Takami S."/>
            <person name="Terashima Y."/>
            <person name="Suzuki O."/>
            <person name="Nakagawa S."/>
            <person name="Senoh A."/>
            <person name="Mizoguchi H."/>
            <person name="Goto Y."/>
            <person name="Shimizu F."/>
            <person name="Wakebe H."/>
            <person name="Hishigaki H."/>
            <person name="Watanabe T."/>
            <person name="Sugiyama A."/>
            <person name="Takemoto M."/>
            <person name="Kawakami B."/>
            <person name="Yamazaki M."/>
            <person name="Watanabe K."/>
            <person name="Kumagai A."/>
            <person name="Itakura S."/>
            <person name="Fukuzumi Y."/>
            <person name="Fujimori Y."/>
            <person name="Komiyama M."/>
            <person name="Tashiro H."/>
            <person name="Tanigami A."/>
            <person name="Fujiwara T."/>
            <person name="Ono T."/>
            <person name="Yamada K."/>
            <person name="Fujii Y."/>
            <person name="Ozaki K."/>
            <person name="Hirao M."/>
            <person name="Ohmori Y."/>
            <person name="Kawabata A."/>
            <person name="Hikiji T."/>
            <person name="Kobatake N."/>
            <person name="Inagaki H."/>
            <person name="Ikema Y."/>
            <person name="Okamoto S."/>
            <person name="Okitani R."/>
            <person name="Kawakami T."/>
            <person name="Noguchi S."/>
            <person name="Itoh T."/>
            <person name="Shigeta K."/>
            <person name="Senba T."/>
            <person name="Matsumura K."/>
            <person name="Nakajima Y."/>
            <person name="Mizuno T."/>
            <person name="Morinaga M."/>
            <person name="Sasaki M."/>
            <person name="Togashi T."/>
            <person name="Oyama M."/>
            <person name="Hata H."/>
            <person name="Watanabe M."/>
            <person name="Komatsu T."/>
            <person name="Mizushima-Sugano J."/>
            <person name="Satoh T."/>
            <person name="Shirai Y."/>
            <person name="Takahashi Y."/>
            <person name="Nakagawa K."/>
            <person name="Okumura K."/>
            <person name="Nagase T."/>
            <person name="Nomura N."/>
            <person name="Kikuchi H."/>
            <person name="Masuho Y."/>
            <person name="Yamashita R."/>
            <person name="Nakai K."/>
            <person name="Yada T."/>
            <person name="Nakamura Y."/>
            <person name="Ohara O."/>
            <person name="Isogai T."/>
            <person name="Sugano S."/>
        </authorList>
    </citation>
    <scope>NUCLEOTIDE SEQUENCE [LARGE SCALE MRNA] (ISOFORM 2)</scope>
    <source>
        <tissue>Amygdala</tissue>
    </source>
</reference>
<reference key="2">
    <citation type="journal article" date="2003" name="Nature">
        <title>The DNA sequence and analysis of human chromosome 6.</title>
        <authorList>
            <person name="Mungall A.J."/>
            <person name="Palmer S.A."/>
            <person name="Sims S.K."/>
            <person name="Edwards C.A."/>
            <person name="Ashurst J.L."/>
            <person name="Wilming L."/>
            <person name="Jones M.C."/>
            <person name="Horton R."/>
            <person name="Hunt S.E."/>
            <person name="Scott C.E."/>
            <person name="Gilbert J.G.R."/>
            <person name="Clamp M.E."/>
            <person name="Bethel G."/>
            <person name="Milne S."/>
            <person name="Ainscough R."/>
            <person name="Almeida J.P."/>
            <person name="Ambrose K.D."/>
            <person name="Andrews T.D."/>
            <person name="Ashwell R.I.S."/>
            <person name="Babbage A.K."/>
            <person name="Bagguley C.L."/>
            <person name="Bailey J."/>
            <person name="Banerjee R."/>
            <person name="Barker D.J."/>
            <person name="Barlow K.F."/>
            <person name="Bates K."/>
            <person name="Beare D.M."/>
            <person name="Beasley H."/>
            <person name="Beasley O."/>
            <person name="Bird C.P."/>
            <person name="Blakey S.E."/>
            <person name="Bray-Allen S."/>
            <person name="Brook J."/>
            <person name="Brown A.J."/>
            <person name="Brown J.Y."/>
            <person name="Burford D.C."/>
            <person name="Burrill W."/>
            <person name="Burton J."/>
            <person name="Carder C."/>
            <person name="Carter N.P."/>
            <person name="Chapman J.C."/>
            <person name="Clark S.Y."/>
            <person name="Clark G."/>
            <person name="Clee C.M."/>
            <person name="Clegg S."/>
            <person name="Cobley V."/>
            <person name="Collier R.E."/>
            <person name="Collins J.E."/>
            <person name="Colman L.K."/>
            <person name="Corby N.R."/>
            <person name="Coville G.J."/>
            <person name="Culley K.M."/>
            <person name="Dhami P."/>
            <person name="Davies J."/>
            <person name="Dunn M."/>
            <person name="Earthrowl M.E."/>
            <person name="Ellington A.E."/>
            <person name="Evans K.A."/>
            <person name="Faulkner L."/>
            <person name="Francis M.D."/>
            <person name="Frankish A."/>
            <person name="Frankland J."/>
            <person name="French L."/>
            <person name="Garner P."/>
            <person name="Garnett J."/>
            <person name="Ghori M.J."/>
            <person name="Gilby L.M."/>
            <person name="Gillson C.J."/>
            <person name="Glithero R.J."/>
            <person name="Grafham D.V."/>
            <person name="Grant M."/>
            <person name="Gribble S."/>
            <person name="Griffiths C."/>
            <person name="Griffiths M.N.D."/>
            <person name="Hall R."/>
            <person name="Halls K.S."/>
            <person name="Hammond S."/>
            <person name="Harley J.L."/>
            <person name="Hart E.A."/>
            <person name="Heath P.D."/>
            <person name="Heathcott R."/>
            <person name="Holmes S.J."/>
            <person name="Howden P.J."/>
            <person name="Howe K.L."/>
            <person name="Howell G.R."/>
            <person name="Huckle E."/>
            <person name="Humphray S.J."/>
            <person name="Humphries M.D."/>
            <person name="Hunt A.R."/>
            <person name="Johnson C.M."/>
            <person name="Joy A.A."/>
            <person name="Kay M."/>
            <person name="Keenan S.J."/>
            <person name="Kimberley A.M."/>
            <person name="King A."/>
            <person name="Laird G.K."/>
            <person name="Langford C."/>
            <person name="Lawlor S."/>
            <person name="Leongamornlert D.A."/>
            <person name="Leversha M."/>
            <person name="Lloyd C.R."/>
            <person name="Lloyd D.M."/>
            <person name="Loveland J.E."/>
            <person name="Lovell J."/>
            <person name="Martin S."/>
            <person name="Mashreghi-Mohammadi M."/>
            <person name="Maslen G.L."/>
            <person name="Matthews L."/>
            <person name="McCann O.T."/>
            <person name="McLaren S.J."/>
            <person name="McLay K."/>
            <person name="McMurray A."/>
            <person name="Moore M.J.F."/>
            <person name="Mullikin J.C."/>
            <person name="Niblett D."/>
            <person name="Nickerson T."/>
            <person name="Novik K.L."/>
            <person name="Oliver K."/>
            <person name="Overton-Larty E.K."/>
            <person name="Parker A."/>
            <person name="Patel R."/>
            <person name="Pearce A.V."/>
            <person name="Peck A.I."/>
            <person name="Phillimore B.J.C.T."/>
            <person name="Phillips S."/>
            <person name="Plumb R.W."/>
            <person name="Porter K.M."/>
            <person name="Ramsey Y."/>
            <person name="Ranby S.A."/>
            <person name="Rice C.M."/>
            <person name="Ross M.T."/>
            <person name="Searle S.M."/>
            <person name="Sehra H.K."/>
            <person name="Sheridan E."/>
            <person name="Skuce C.D."/>
            <person name="Smith S."/>
            <person name="Smith M."/>
            <person name="Spraggon L."/>
            <person name="Squares S.L."/>
            <person name="Steward C.A."/>
            <person name="Sycamore N."/>
            <person name="Tamlyn-Hall G."/>
            <person name="Tester J."/>
            <person name="Theaker A.J."/>
            <person name="Thomas D.W."/>
            <person name="Thorpe A."/>
            <person name="Tracey A."/>
            <person name="Tromans A."/>
            <person name="Tubby B."/>
            <person name="Wall M."/>
            <person name="Wallis J.M."/>
            <person name="West A.P."/>
            <person name="White S.S."/>
            <person name="Whitehead S.L."/>
            <person name="Whittaker H."/>
            <person name="Wild A."/>
            <person name="Willey D.J."/>
            <person name="Wilmer T.E."/>
            <person name="Wood J.M."/>
            <person name="Wray P.W."/>
            <person name="Wyatt J.C."/>
            <person name="Young L."/>
            <person name="Younger R.M."/>
            <person name="Bentley D.R."/>
            <person name="Coulson A."/>
            <person name="Durbin R.M."/>
            <person name="Hubbard T."/>
            <person name="Sulston J.E."/>
            <person name="Dunham I."/>
            <person name="Rogers J."/>
            <person name="Beck S."/>
        </authorList>
    </citation>
    <scope>NUCLEOTIDE SEQUENCE [LARGE SCALE GENOMIC DNA]</scope>
</reference>
<reference key="3">
    <citation type="submission" date="2005-09" db="EMBL/GenBank/DDBJ databases">
        <authorList>
            <person name="Mural R.J."/>
            <person name="Istrail S."/>
            <person name="Sutton G.G."/>
            <person name="Florea L."/>
            <person name="Halpern A.L."/>
            <person name="Mobarry C.M."/>
            <person name="Lippert R."/>
            <person name="Walenz B."/>
            <person name="Shatkay H."/>
            <person name="Dew I."/>
            <person name="Miller J.R."/>
            <person name="Flanigan M.J."/>
            <person name="Edwards N.J."/>
            <person name="Bolanos R."/>
            <person name="Fasulo D."/>
            <person name="Halldorsson B.V."/>
            <person name="Hannenhalli S."/>
            <person name="Turner R."/>
            <person name="Yooseph S."/>
            <person name="Lu F."/>
            <person name="Nusskern D.R."/>
            <person name="Shue B.C."/>
            <person name="Zheng X.H."/>
            <person name="Zhong F."/>
            <person name="Delcher A.L."/>
            <person name="Huson D.H."/>
            <person name="Kravitz S.A."/>
            <person name="Mouchard L."/>
            <person name="Reinert K."/>
            <person name="Remington K.A."/>
            <person name="Clark A.G."/>
            <person name="Waterman M.S."/>
            <person name="Eichler E.E."/>
            <person name="Adams M.D."/>
            <person name="Hunkapiller M.W."/>
            <person name="Myers E.W."/>
            <person name="Venter J.C."/>
        </authorList>
    </citation>
    <scope>NUCLEOTIDE SEQUENCE [LARGE SCALE GENOMIC DNA]</scope>
</reference>
<reference key="4">
    <citation type="journal article" date="2004" name="Genome Res.">
        <title>The status, quality, and expansion of the NIH full-length cDNA project: the Mammalian Gene Collection (MGC).</title>
        <authorList>
            <consortium name="The MGC Project Team"/>
        </authorList>
    </citation>
    <scope>NUCLEOTIDE SEQUENCE [LARGE SCALE MRNA] (ISOFORM 1)</scope>
    <source>
        <tissue>Brain</tissue>
        <tissue>Skin</tissue>
        <tissue>Testis</tissue>
    </source>
</reference>
<reference key="5">
    <citation type="journal article" date="2004" name="Proc. Natl. Acad. Sci. U.S.A.">
        <title>Large-scale cDNA transfection screening for genes related to cancer development and progression.</title>
        <authorList>
            <person name="Wan D."/>
            <person name="Gong Y."/>
            <person name="Qin W."/>
            <person name="Zhang P."/>
            <person name="Li J."/>
            <person name="Wei L."/>
            <person name="Zhou X."/>
            <person name="Li H."/>
            <person name="Qiu X."/>
            <person name="Zhong F."/>
            <person name="He L."/>
            <person name="Yu J."/>
            <person name="Yao G."/>
            <person name="Jiang H."/>
            <person name="Qian L."/>
            <person name="Yu Y."/>
            <person name="Shu H."/>
            <person name="Chen X."/>
            <person name="Xu H."/>
            <person name="Guo M."/>
            <person name="Pan Z."/>
            <person name="Chen Y."/>
            <person name="Ge C."/>
            <person name="Yang S."/>
            <person name="Gu J."/>
        </authorList>
    </citation>
    <scope>NUCLEOTIDE SEQUENCE [LARGE SCALE MRNA] OF 100-455 (ISOFORM 1/2)</scope>
</reference>
<reference key="6">
    <citation type="journal article" date="2009" name="Science">
        <title>Lysine acetylation targets protein complexes and co-regulates major cellular functions.</title>
        <authorList>
            <person name="Choudhary C."/>
            <person name="Kumar C."/>
            <person name="Gnad F."/>
            <person name="Nielsen M.L."/>
            <person name="Rehman M."/>
            <person name="Walther T.C."/>
            <person name="Olsen J.V."/>
            <person name="Mann M."/>
        </authorList>
    </citation>
    <scope>ACETYLATION [LARGE SCALE ANALYSIS] AT LYS-171</scope>
    <scope>IDENTIFICATION BY MASS SPECTROMETRY [LARGE SCALE ANALYSIS]</scope>
</reference>
<reference key="7">
    <citation type="journal article" date="2011" name="BMC Syst. Biol.">
        <title>Initial characterization of the human central proteome.</title>
        <authorList>
            <person name="Burkard T.R."/>
            <person name="Planyavsky M."/>
            <person name="Kaupe I."/>
            <person name="Breitwieser F.P."/>
            <person name="Buerckstuemmer T."/>
            <person name="Bennett K.L."/>
            <person name="Superti-Furga G."/>
            <person name="Colinge J."/>
        </authorList>
    </citation>
    <scope>IDENTIFICATION BY MASS SPECTROMETRY [LARGE SCALE ANALYSIS]</scope>
</reference>
<sequence>MAQHFSLAACDVVGFDLDHTLCRYNLPESAPLIYNSFAQFLVKEKGYDKELLNVTPEDWDFCCKGLALDLEDGNFLKLANNGTVLRASHGTKMMTPEVLAEAYGKKEWKHFLSDTGMACRSGKYYFYDNYFDLPGALLCARVVDYLTKLNNGQKTFDFWKDIVAAIQHNYKMSAFKENCGIYFPEIKRDPGRYLHSCPESVKKWLRQLKNAGKILLLITSSHSDYCRLLCEYILGNDFTDLFDIVITNALKPGFFSHLPSQRPFRTLENDEEQEALPSLDKPGWYSQGNAVHLYELLKKMTGKPEPKVVYFGDSMHSDIFPARHYSNWETVLILEELRGDEGTRSQRPEESEPLEKKGKYEGPKAKPLNTSSKKWGSFFIDSVLGLENTEDSLVYTWSCKRISTYSTIAIPSIEAIAELPLDYKFTRFSSSNSKTAGYYPNPPLVLSSDETLISK</sequence>
<proteinExistence type="evidence at protein level"/>
<gene>
    <name type="primary">NT5DC1</name>
    <name type="synonym">NT5C2L1</name>
    <name type="ORF">LP2642</name>
</gene>
<feature type="chain" id="PRO_0000247222" description="5'-nucleotidase domain-containing protein 1">
    <location>
        <begin position="1"/>
        <end position="455"/>
    </location>
</feature>
<feature type="region of interest" description="Disordered" evidence="2">
    <location>
        <begin position="339"/>
        <end position="368"/>
    </location>
</feature>
<feature type="compositionally biased region" description="Basic and acidic residues" evidence="2">
    <location>
        <begin position="339"/>
        <end position="364"/>
    </location>
</feature>
<feature type="active site" description="Nucleophile" evidence="1">
    <location>
        <position position="16"/>
    </location>
</feature>
<feature type="active site" description="Proton donor" evidence="1">
    <location>
        <position position="18"/>
    </location>
</feature>
<feature type="binding site" evidence="1">
    <location>
        <position position="16"/>
    </location>
    <ligand>
        <name>Mg(2+)</name>
        <dbReference type="ChEBI" id="CHEBI:18420"/>
    </ligand>
</feature>
<feature type="binding site" evidence="1">
    <location>
        <position position="18"/>
    </location>
    <ligand>
        <name>Mg(2+)</name>
        <dbReference type="ChEBI" id="CHEBI:18420"/>
    </ligand>
</feature>
<feature type="binding site" evidence="1">
    <location>
        <position position="313"/>
    </location>
    <ligand>
        <name>Mg(2+)</name>
        <dbReference type="ChEBI" id="CHEBI:18420"/>
    </ligand>
</feature>
<feature type="modified residue" description="N6-acetyllysine" evidence="5">
    <location>
        <position position="171"/>
    </location>
</feature>
<feature type="splice variant" id="VSP_054236" description="In isoform 2." evidence="3">
    <original>MAQHFSLAACDVVGFDLDHTLCRYNLPESAPLIYNSFAQFLVKEKGYDKELLNVTPEDWDFCCKGLALDLEDGNFLKLANNGTVL</original>
    <variation>MFLLAPVATGINSHNDRGRGIQGTINEQCASSLKI</variation>
    <location>
        <begin position="1"/>
        <end position="85"/>
    </location>
</feature>
<dbReference type="EC" id="3.1.3.-"/>
<dbReference type="EMBL" id="AK090918">
    <property type="protein sequence ID" value="BAG52247.1"/>
    <property type="molecule type" value="mRNA"/>
</dbReference>
<dbReference type="EMBL" id="AL050331">
    <property type="status" value="NOT_ANNOTATED_CDS"/>
    <property type="molecule type" value="Genomic_DNA"/>
</dbReference>
<dbReference type="EMBL" id="AL121963">
    <property type="status" value="NOT_ANNOTATED_CDS"/>
    <property type="molecule type" value="Genomic_DNA"/>
</dbReference>
<dbReference type="EMBL" id="CH471051">
    <property type="protein sequence ID" value="EAW48237.1"/>
    <property type="molecule type" value="Genomic_DNA"/>
</dbReference>
<dbReference type="EMBL" id="CH471051">
    <property type="protein sequence ID" value="EAW48239.1"/>
    <property type="molecule type" value="Genomic_DNA"/>
</dbReference>
<dbReference type="EMBL" id="BC108699">
    <property type="protein sequence ID" value="AAI08700.1"/>
    <property type="molecule type" value="mRNA"/>
</dbReference>
<dbReference type="EMBL" id="BC136832">
    <property type="protein sequence ID" value="AAI36833.1"/>
    <property type="molecule type" value="mRNA"/>
</dbReference>
<dbReference type="EMBL" id="BC136841">
    <property type="protein sequence ID" value="AAI36842.1"/>
    <property type="molecule type" value="mRNA"/>
</dbReference>
<dbReference type="EMBL" id="AY203935">
    <property type="protein sequence ID" value="AAP34458.1"/>
    <property type="status" value="ALT_FRAME"/>
    <property type="molecule type" value="mRNA"/>
</dbReference>
<dbReference type="CCDS" id="CCDS5104.1">
    <molecule id="Q5TFE4-1"/>
</dbReference>
<dbReference type="RefSeq" id="NP_689942.2">
    <molecule id="Q5TFE4-1"/>
    <property type="nucleotide sequence ID" value="NM_152729.2"/>
</dbReference>
<dbReference type="SMR" id="Q5TFE4"/>
<dbReference type="BioGRID" id="128704">
    <property type="interactions" value="28"/>
</dbReference>
<dbReference type="FunCoup" id="Q5TFE4">
    <property type="interactions" value="595"/>
</dbReference>
<dbReference type="IntAct" id="Q5TFE4">
    <property type="interactions" value="10"/>
</dbReference>
<dbReference type="STRING" id="9606.ENSP00000326858"/>
<dbReference type="ChEMBL" id="CHEMBL4295852"/>
<dbReference type="DEPOD" id="NT5DC1"/>
<dbReference type="GlyGen" id="Q5TFE4">
    <property type="glycosylation" value="1 site, 1 O-linked glycan (1 site)"/>
</dbReference>
<dbReference type="iPTMnet" id="Q5TFE4"/>
<dbReference type="PhosphoSitePlus" id="Q5TFE4"/>
<dbReference type="BioMuta" id="NT5DC1"/>
<dbReference type="DMDM" id="74746390"/>
<dbReference type="jPOST" id="Q5TFE4"/>
<dbReference type="MassIVE" id="Q5TFE4"/>
<dbReference type="PaxDb" id="9606-ENSP00000326858"/>
<dbReference type="PeptideAtlas" id="Q5TFE4"/>
<dbReference type="ProteomicsDB" id="65082">
    <molecule id="Q5TFE4-1"/>
</dbReference>
<dbReference type="Pumba" id="Q5TFE4"/>
<dbReference type="Antibodypedia" id="32478">
    <property type="antibodies" value="212 antibodies from 16 providers"/>
</dbReference>
<dbReference type="DNASU" id="221294"/>
<dbReference type="Ensembl" id="ENST00000319550.9">
    <molecule id="Q5TFE4-1"/>
    <property type="protein sequence ID" value="ENSP00000326858.3"/>
    <property type="gene ID" value="ENSG00000178425.14"/>
</dbReference>
<dbReference type="GeneID" id="221294"/>
<dbReference type="KEGG" id="hsa:221294"/>
<dbReference type="MANE-Select" id="ENST00000319550.9">
    <property type="protein sequence ID" value="ENSP00000326858.3"/>
    <property type="RefSeq nucleotide sequence ID" value="NM_152729.3"/>
    <property type="RefSeq protein sequence ID" value="NP_689942.2"/>
</dbReference>
<dbReference type="UCSC" id="uc003pwj.4">
    <molecule id="Q5TFE4-1"/>
    <property type="organism name" value="human"/>
</dbReference>
<dbReference type="AGR" id="HGNC:21556"/>
<dbReference type="CTD" id="221294"/>
<dbReference type="DisGeNET" id="221294"/>
<dbReference type="GeneCards" id="NT5DC1"/>
<dbReference type="HGNC" id="HGNC:21556">
    <property type="gene designation" value="NT5DC1"/>
</dbReference>
<dbReference type="HPA" id="ENSG00000178425">
    <property type="expression patterns" value="Tissue enhanced (choroid)"/>
</dbReference>
<dbReference type="MalaCards" id="NT5DC1"/>
<dbReference type="MIM" id="621076">
    <property type="type" value="gene"/>
</dbReference>
<dbReference type="neXtProt" id="NX_Q5TFE4"/>
<dbReference type="OpenTargets" id="ENSG00000178425"/>
<dbReference type="PharmGKB" id="PA134892962"/>
<dbReference type="VEuPathDB" id="HostDB:ENSG00000178425"/>
<dbReference type="eggNOG" id="KOG2469">
    <property type="taxonomic scope" value="Eukaryota"/>
</dbReference>
<dbReference type="GeneTree" id="ENSGT00940000155676"/>
<dbReference type="HOGENOM" id="CLU_029966_0_0_1"/>
<dbReference type="InParanoid" id="Q5TFE4"/>
<dbReference type="OMA" id="ICSNPYG"/>
<dbReference type="OrthoDB" id="6503940at2759"/>
<dbReference type="PAN-GO" id="Q5TFE4">
    <property type="GO annotations" value="1 GO annotation based on evolutionary models"/>
</dbReference>
<dbReference type="PhylomeDB" id="Q5TFE4"/>
<dbReference type="TreeFam" id="TF325912"/>
<dbReference type="PathwayCommons" id="Q5TFE4"/>
<dbReference type="SignaLink" id="Q5TFE4"/>
<dbReference type="BioGRID-ORCS" id="221294">
    <property type="hits" value="40 hits in 1150 CRISPR screens"/>
</dbReference>
<dbReference type="ChiTaRS" id="NT5DC1">
    <property type="organism name" value="human"/>
</dbReference>
<dbReference type="GenomeRNAi" id="221294"/>
<dbReference type="Pharos" id="Q5TFE4">
    <property type="development level" value="Tdark"/>
</dbReference>
<dbReference type="PRO" id="PR:Q5TFE4"/>
<dbReference type="Proteomes" id="UP000005640">
    <property type="component" value="Chromosome 6"/>
</dbReference>
<dbReference type="RNAct" id="Q5TFE4">
    <property type="molecule type" value="protein"/>
</dbReference>
<dbReference type="Bgee" id="ENSG00000178425">
    <property type="expression patterns" value="Expressed in corpus callosum and 189 other cell types or tissues"/>
</dbReference>
<dbReference type="ExpressionAtlas" id="Q5TFE4">
    <property type="expression patterns" value="baseline and differential"/>
</dbReference>
<dbReference type="GO" id="GO:0008253">
    <property type="term" value="F:5'-nucleotidase activity"/>
    <property type="evidence" value="ECO:0000318"/>
    <property type="project" value="GO_Central"/>
</dbReference>
<dbReference type="GO" id="GO:0046872">
    <property type="term" value="F:metal ion binding"/>
    <property type="evidence" value="ECO:0007669"/>
    <property type="project" value="UniProtKB-KW"/>
</dbReference>
<dbReference type="FunFam" id="3.40.50.1000:FF:000086">
    <property type="entry name" value="LD24878p"/>
    <property type="match status" value="1"/>
</dbReference>
<dbReference type="Gene3D" id="3.40.50.1000">
    <property type="entry name" value="HAD superfamily/HAD-like"/>
    <property type="match status" value="1"/>
</dbReference>
<dbReference type="InterPro" id="IPR036412">
    <property type="entry name" value="HAD-like_sf"/>
</dbReference>
<dbReference type="InterPro" id="IPR008380">
    <property type="entry name" value="HAD-SF_hydro_IG_5-nucl"/>
</dbReference>
<dbReference type="InterPro" id="IPR023214">
    <property type="entry name" value="HAD_sf"/>
</dbReference>
<dbReference type="PANTHER" id="PTHR12103">
    <property type="entry name" value="5'-NUCLEOTIDASE DOMAIN-CONTAINING"/>
    <property type="match status" value="1"/>
</dbReference>
<dbReference type="PANTHER" id="PTHR12103:SF38">
    <property type="entry name" value="5'-NUCLEOTIDASE DOMAIN-CONTAINING PROTEIN 1"/>
    <property type="match status" value="1"/>
</dbReference>
<dbReference type="Pfam" id="PF05761">
    <property type="entry name" value="5_nucleotid"/>
    <property type="match status" value="1"/>
</dbReference>
<dbReference type="SUPFAM" id="SSF56784">
    <property type="entry name" value="HAD-like"/>
    <property type="match status" value="1"/>
</dbReference>
<comment type="interaction">
    <interactant intactId="EBI-2828531">
        <id>Q5TFE4</id>
    </interactant>
    <interactant intactId="EBI-6916562">
        <id>Q58FG1</id>
        <label>HSP90AA4P</label>
    </interactant>
    <organismsDiffer>false</organismsDiffer>
    <experiments>2</experiments>
</comment>
<comment type="alternative products">
    <event type="alternative splicing"/>
    <isoform>
        <id>Q5TFE4-1</id>
        <name>1</name>
        <sequence type="displayed"/>
    </isoform>
    <isoform>
        <id>Q5TFE4-2</id>
        <name>2</name>
        <sequence type="described" ref="VSP_054236"/>
    </isoform>
</comment>
<comment type="similarity">
    <text evidence="4">Belongs to the 5'(3')-deoxyribonucleotidase family.</text>
</comment>
<comment type="sequence caution" evidence="4">
    <conflict type="frameshift">
        <sequence resource="EMBL-CDS" id="AAP34458"/>
    </conflict>
</comment>
<evidence type="ECO:0000250" key="1"/>
<evidence type="ECO:0000256" key="2">
    <source>
        <dbReference type="SAM" id="MobiDB-lite"/>
    </source>
</evidence>
<evidence type="ECO:0000303" key="3">
    <source>
    </source>
</evidence>
<evidence type="ECO:0000305" key="4"/>
<evidence type="ECO:0007744" key="5">
    <source>
    </source>
</evidence>
<keyword id="KW-0007">Acetylation</keyword>
<keyword id="KW-0025">Alternative splicing</keyword>
<keyword id="KW-0378">Hydrolase</keyword>
<keyword id="KW-0460">Magnesium</keyword>
<keyword id="KW-0479">Metal-binding</keyword>
<keyword id="KW-1267">Proteomics identification</keyword>
<keyword id="KW-1185">Reference proteome</keyword>
<accession>Q5TFE4</accession>
<accession>B2RND9</accession>
<accession>B3KR35</accession>
<accession>Q6XYD5</accession>
<protein>
    <recommendedName>
        <fullName>5'-nucleotidase domain-containing protein 1</fullName>
        <ecNumber>3.1.3.-</ecNumber>
    </recommendedName>
</protein>
<organism>
    <name type="scientific">Homo sapiens</name>
    <name type="common">Human</name>
    <dbReference type="NCBI Taxonomy" id="9606"/>
    <lineage>
        <taxon>Eukaryota</taxon>
        <taxon>Metazoa</taxon>
        <taxon>Chordata</taxon>
        <taxon>Craniata</taxon>
        <taxon>Vertebrata</taxon>
        <taxon>Euteleostomi</taxon>
        <taxon>Mammalia</taxon>
        <taxon>Eutheria</taxon>
        <taxon>Euarchontoglires</taxon>
        <taxon>Primates</taxon>
        <taxon>Haplorrhini</taxon>
        <taxon>Catarrhini</taxon>
        <taxon>Hominidae</taxon>
        <taxon>Homo</taxon>
    </lineage>
</organism>
<name>NT5D1_HUMAN</name>